<name>PARC_PSEAE</name>
<proteinExistence type="inferred from homology"/>
<comment type="function">
    <text evidence="1">Topoisomerase IV is essential for chromosome segregation. It relaxes supercoiled DNA. Performs the decatenation events required during the replication of a circular DNA molecule.</text>
</comment>
<comment type="catalytic activity">
    <reaction evidence="1">
        <text>ATP-dependent breakage, passage and rejoining of double-stranded DNA.</text>
        <dbReference type="EC" id="5.6.2.2"/>
    </reaction>
</comment>
<comment type="subunit">
    <text evidence="1">Heterotetramer composed of ParC and ParE.</text>
</comment>
<comment type="subcellular location">
    <subcellularLocation>
        <location evidence="1">Cell membrane</location>
        <topology evidence="1">Peripheral membrane protein</topology>
    </subcellularLocation>
</comment>
<comment type="similarity">
    <text evidence="1">Belongs to the type II topoisomerase GyrA/ParC subunit family. ParC type 1 subfamily.</text>
</comment>
<dbReference type="EC" id="5.6.2.2" evidence="1"/>
<dbReference type="EMBL" id="AE004091">
    <property type="protein sequence ID" value="AAG08349.1"/>
    <property type="molecule type" value="Genomic_DNA"/>
</dbReference>
<dbReference type="PIR" id="G83025">
    <property type="entry name" value="G83025"/>
</dbReference>
<dbReference type="RefSeq" id="NP_253651.1">
    <property type="nucleotide sequence ID" value="NC_002516.2"/>
</dbReference>
<dbReference type="RefSeq" id="WP_003095687.1">
    <property type="nucleotide sequence ID" value="NZ_QZGE01000002.1"/>
</dbReference>
<dbReference type="SMR" id="Q9HUK1"/>
<dbReference type="FunCoup" id="Q9HUK1">
    <property type="interactions" value="212"/>
</dbReference>
<dbReference type="STRING" id="208964.PA4964"/>
<dbReference type="ChEMBL" id="CHEMBL3390827"/>
<dbReference type="PaxDb" id="208964-PA4964"/>
<dbReference type="GeneID" id="879741"/>
<dbReference type="KEGG" id="pae:PA4964"/>
<dbReference type="PATRIC" id="fig|208964.12.peg.5198"/>
<dbReference type="PseudoCAP" id="PA4964"/>
<dbReference type="HOGENOM" id="CLU_002977_4_1_6"/>
<dbReference type="InParanoid" id="Q9HUK1"/>
<dbReference type="OrthoDB" id="9806486at2"/>
<dbReference type="PhylomeDB" id="Q9HUK1"/>
<dbReference type="BioCyc" id="PAER208964:G1FZ6-5080-MONOMER"/>
<dbReference type="Proteomes" id="UP000002438">
    <property type="component" value="Chromosome"/>
</dbReference>
<dbReference type="GO" id="GO:0005694">
    <property type="term" value="C:chromosome"/>
    <property type="evidence" value="ECO:0007669"/>
    <property type="project" value="InterPro"/>
</dbReference>
<dbReference type="GO" id="GO:0005737">
    <property type="term" value="C:cytoplasm"/>
    <property type="evidence" value="ECO:0000318"/>
    <property type="project" value="GO_Central"/>
</dbReference>
<dbReference type="GO" id="GO:0009340">
    <property type="term" value="C:DNA topoisomerase IV complex"/>
    <property type="evidence" value="ECO:0000314"/>
    <property type="project" value="PseudoCAP"/>
</dbReference>
<dbReference type="GO" id="GO:0009330">
    <property type="term" value="C:DNA topoisomerase type II (double strand cut, ATP-hydrolyzing) complex"/>
    <property type="evidence" value="ECO:0000318"/>
    <property type="project" value="GO_Central"/>
</dbReference>
<dbReference type="GO" id="GO:0019897">
    <property type="term" value="C:extrinsic component of plasma membrane"/>
    <property type="evidence" value="ECO:0007669"/>
    <property type="project" value="UniProtKB-UniRule"/>
</dbReference>
<dbReference type="GO" id="GO:0005524">
    <property type="term" value="F:ATP binding"/>
    <property type="evidence" value="ECO:0000318"/>
    <property type="project" value="GO_Central"/>
</dbReference>
<dbReference type="GO" id="GO:0003677">
    <property type="term" value="F:DNA binding"/>
    <property type="evidence" value="ECO:0000318"/>
    <property type="project" value="GO_Central"/>
</dbReference>
<dbReference type="GO" id="GO:0003918">
    <property type="term" value="F:DNA topoisomerase type II (double strand cut, ATP-hydrolyzing) activity"/>
    <property type="evidence" value="ECO:0000314"/>
    <property type="project" value="PseudoCAP"/>
</dbReference>
<dbReference type="GO" id="GO:0007059">
    <property type="term" value="P:chromosome segregation"/>
    <property type="evidence" value="ECO:0000318"/>
    <property type="project" value="GO_Central"/>
</dbReference>
<dbReference type="GO" id="GO:0006265">
    <property type="term" value="P:DNA topological change"/>
    <property type="evidence" value="ECO:0000314"/>
    <property type="project" value="PseudoCAP"/>
</dbReference>
<dbReference type="CDD" id="cd00187">
    <property type="entry name" value="TOP4c"/>
    <property type="match status" value="1"/>
</dbReference>
<dbReference type="FunFam" id="1.10.268.10:FF:000001">
    <property type="entry name" value="DNA gyrase subunit A"/>
    <property type="match status" value="1"/>
</dbReference>
<dbReference type="FunFam" id="2.120.10.90:FF:000003">
    <property type="entry name" value="DNA topoisomerase 4 subunit A"/>
    <property type="match status" value="1"/>
</dbReference>
<dbReference type="FunFam" id="3.30.1360.40:FF:000005">
    <property type="entry name" value="DNA topoisomerase 4 subunit A"/>
    <property type="match status" value="1"/>
</dbReference>
<dbReference type="Gene3D" id="3.30.1360.40">
    <property type="match status" value="1"/>
</dbReference>
<dbReference type="Gene3D" id="2.120.10.90">
    <property type="entry name" value="DNA gyrase/topoisomerase IV, subunit A, C-terminal"/>
    <property type="match status" value="1"/>
</dbReference>
<dbReference type="Gene3D" id="3.90.199.10">
    <property type="entry name" value="Topoisomerase II, domain 5"/>
    <property type="match status" value="1"/>
</dbReference>
<dbReference type="Gene3D" id="1.10.268.10">
    <property type="entry name" value="Topoisomerase, domain 3"/>
    <property type="match status" value="1"/>
</dbReference>
<dbReference type="HAMAP" id="MF_00936">
    <property type="entry name" value="ParC_type1"/>
    <property type="match status" value="1"/>
</dbReference>
<dbReference type="InterPro" id="IPR006691">
    <property type="entry name" value="GyrA/parC_rep"/>
</dbReference>
<dbReference type="InterPro" id="IPR035516">
    <property type="entry name" value="Gyrase/topoIV_suA_C"/>
</dbReference>
<dbReference type="InterPro" id="IPR013760">
    <property type="entry name" value="Topo_IIA-like_dom_sf"/>
</dbReference>
<dbReference type="InterPro" id="IPR013758">
    <property type="entry name" value="Topo_IIA_A/C_ab"/>
</dbReference>
<dbReference type="InterPro" id="IPR013757">
    <property type="entry name" value="Topo_IIA_A_a_sf"/>
</dbReference>
<dbReference type="InterPro" id="IPR002205">
    <property type="entry name" value="Topo_IIA_dom_A"/>
</dbReference>
<dbReference type="InterPro" id="IPR005742">
    <property type="entry name" value="TopoIV_A_Gneg"/>
</dbReference>
<dbReference type="InterPro" id="IPR050220">
    <property type="entry name" value="Type_II_DNA_Topoisomerases"/>
</dbReference>
<dbReference type="NCBIfam" id="TIGR01062">
    <property type="entry name" value="parC_Gneg"/>
    <property type="match status" value="1"/>
</dbReference>
<dbReference type="NCBIfam" id="NF004044">
    <property type="entry name" value="PRK05561.1"/>
    <property type="match status" value="1"/>
</dbReference>
<dbReference type="PANTHER" id="PTHR43493">
    <property type="entry name" value="DNA GYRASE/TOPOISOMERASE SUBUNIT A"/>
    <property type="match status" value="1"/>
</dbReference>
<dbReference type="PANTHER" id="PTHR43493:SF1">
    <property type="entry name" value="DNA TOPOISOMERASE 4 SUBUNIT A"/>
    <property type="match status" value="1"/>
</dbReference>
<dbReference type="Pfam" id="PF03989">
    <property type="entry name" value="DNA_gyraseA_C"/>
    <property type="match status" value="2"/>
</dbReference>
<dbReference type="Pfam" id="PF00521">
    <property type="entry name" value="DNA_topoisoIV"/>
    <property type="match status" value="1"/>
</dbReference>
<dbReference type="SMART" id="SM00434">
    <property type="entry name" value="TOP4c"/>
    <property type="match status" value="1"/>
</dbReference>
<dbReference type="SUPFAM" id="SSF101904">
    <property type="entry name" value="GyrA/ParC C-terminal domain-like"/>
    <property type="match status" value="1"/>
</dbReference>
<dbReference type="SUPFAM" id="SSF56719">
    <property type="entry name" value="Type II DNA topoisomerase"/>
    <property type="match status" value="1"/>
</dbReference>
<dbReference type="PROSITE" id="PS52040">
    <property type="entry name" value="TOPO_IIA"/>
    <property type="match status" value="1"/>
</dbReference>
<sequence>MSESLDLSLEGVERRSLAEFTEQAYLNYSMYVIMDRALPHIGDGLKPVQRRIVYAMSELGLDADSKHKKSARTVGDVLGKFHPHGDSACYEAMVLMAQPFSYRYPLVDGQGNWGAPDDPKSFAAMRYTEARLSRYSEVLLSELGQGTVDWVPNFDGTLDEPAVLPARLPNLLLNGTTGIAVGMATDVPPHNLREVASACVRLLDQPGATVAELCEHVPGPDFPTEAEIITPRADLQKVYETGRGSVRMRAVYRVEDGDIVIHALPHQVSGSKVLEQIAGQMQAKKLPMVADLRDESDHENPTRIVIIPRSNRVDVEELMTHLFATTDLETSYRVNLNIIGLDGKPQVKDLRQLLSEWLQFRIGTVRRRLQFRLDKVERRLHLLDGLLIAFLNLDEVIHIIRTEDQPKAVLMERFELSEVQADYILDTRLRQLARLEEMKIRGEQEELLKEQKRLQTLLGSEAKLKKLVREELIKDAETYGDDRRSPIVARAEARALSETELMPTEPVTVVLSEKGWVRCAKGHDIDAAGLSYKAGDGFKAAAPGRSNQYAVFIDSTGRSYSLPAHSLPSARGQGEPLSGRLTPPPGASFECVLLPDDDALFVIASDAGYGFVVKGEDLQAKNKAGKALLSLPNGSAVVAPRPVRDVEQDWLAAVTTEGRLLLFKVSDLPQLGKGKGNKIIGIPGERVASREEYLTDLAVLPAGATLVLQAGKRTLSLKGDDLEHYKGERGRRGNKLPRGFQRVDSLLVDIPPQD</sequence>
<evidence type="ECO:0000255" key="1">
    <source>
        <dbReference type="HAMAP-Rule" id="MF_00936"/>
    </source>
</evidence>
<evidence type="ECO:0000255" key="2">
    <source>
        <dbReference type="PROSITE-ProRule" id="PRU01384"/>
    </source>
</evidence>
<feature type="chain" id="PRO_0000287821" description="DNA topoisomerase 4 subunit A">
    <location>
        <begin position="1"/>
        <end position="754"/>
    </location>
</feature>
<feature type="domain" description="Topo IIA-type catalytic" evidence="2">
    <location>
        <begin position="38"/>
        <end position="501"/>
    </location>
</feature>
<feature type="active site" description="O-(5'-phospho-DNA)-tyrosine intermediate" evidence="1">
    <location>
        <position position="127"/>
    </location>
</feature>
<feature type="site" description="Interaction with DNA" evidence="1">
    <location>
        <position position="46"/>
    </location>
</feature>
<feature type="site" description="Interaction with DNA" evidence="1">
    <location>
        <position position="82"/>
    </location>
</feature>
<feature type="site" description="Interaction with DNA" evidence="1">
    <location>
        <position position="84"/>
    </location>
</feature>
<feature type="site" description="Transition state stabilizer" evidence="1">
    <location>
        <position position="126"/>
    </location>
</feature>
<protein>
    <recommendedName>
        <fullName evidence="1">DNA topoisomerase 4 subunit A</fullName>
        <ecNumber evidence="1">5.6.2.2</ecNumber>
    </recommendedName>
    <alternativeName>
        <fullName evidence="1">Topoisomerase IV subunit A</fullName>
    </alternativeName>
</protein>
<gene>
    <name evidence="1" type="primary">parC</name>
    <name type="ordered locus">PA4964</name>
</gene>
<accession>Q9HUK1</accession>
<organism>
    <name type="scientific">Pseudomonas aeruginosa (strain ATCC 15692 / DSM 22644 / CIP 104116 / JCM 14847 / LMG 12228 / 1C / PRS 101 / PAO1)</name>
    <dbReference type="NCBI Taxonomy" id="208964"/>
    <lineage>
        <taxon>Bacteria</taxon>
        <taxon>Pseudomonadati</taxon>
        <taxon>Pseudomonadota</taxon>
        <taxon>Gammaproteobacteria</taxon>
        <taxon>Pseudomonadales</taxon>
        <taxon>Pseudomonadaceae</taxon>
        <taxon>Pseudomonas</taxon>
    </lineage>
</organism>
<reference key="1">
    <citation type="journal article" date="2000" name="Nature">
        <title>Complete genome sequence of Pseudomonas aeruginosa PAO1, an opportunistic pathogen.</title>
        <authorList>
            <person name="Stover C.K."/>
            <person name="Pham X.-Q.T."/>
            <person name="Erwin A.L."/>
            <person name="Mizoguchi S.D."/>
            <person name="Warrener P."/>
            <person name="Hickey M.J."/>
            <person name="Brinkman F.S.L."/>
            <person name="Hufnagle W.O."/>
            <person name="Kowalik D.J."/>
            <person name="Lagrou M."/>
            <person name="Garber R.L."/>
            <person name="Goltry L."/>
            <person name="Tolentino E."/>
            <person name="Westbrock-Wadman S."/>
            <person name="Yuan Y."/>
            <person name="Brody L.L."/>
            <person name="Coulter S.N."/>
            <person name="Folger K.R."/>
            <person name="Kas A."/>
            <person name="Larbig K."/>
            <person name="Lim R.M."/>
            <person name="Smith K.A."/>
            <person name="Spencer D.H."/>
            <person name="Wong G.K.-S."/>
            <person name="Wu Z."/>
            <person name="Paulsen I.T."/>
            <person name="Reizer J."/>
            <person name="Saier M.H. Jr."/>
            <person name="Hancock R.E.W."/>
            <person name="Lory S."/>
            <person name="Olson M.V."/>
        </authorList>
    </citation>
    <scope>NUCLEOTIDE SEQUENCE [LARGE SCALE GENOMIC DNA]</scope>
    <source>
        <strain>ATCC 15692 / DSM 22644 / CIP 104116 / JCM 14847 / LMG 12228 / 1C / PRS 101 / PAO1</strain>
    </source>
</reference>
<keyword id="KW-1003">Cell membrane</keyword>
<keyword id="KW-0238">DNA-binding</keyword>
<keyword id="KW-0413">Isomerase</keyword>
<keyword id="KW-0472">Membrane</keyword>
<keyword id="KW-1185">Reference proteome</keyword>
<keyword id="KW-0799">Topoisomerase</keyword>